<protein>
    <recommendedName>
        <fullName evidence="6">tRNA (cytosine(72)-C(5))-methyltransferase</fullName>
        <shortName evidence="5">tRNA:m(5)C72 MTase</shortName>
        <ecNumber evidence="4">2.1.1.-</ecNumber>
    </recommendedName>
    <alternativeName>
        <fullName evidence="5">PhNSun6</fullName>
    </alternativeName>
</protein>
<proteinExistence type="evidence at protein level"/>
<comment type="function">
    <text evidence="4">S-adenosyl-L-methionine-dependent methyltransferase that specifically methylates the C5 position of cytosine 72 in several tRNAs. This modification appears to slightly promote the thermal stability of P.horikoshii tRNAs, but does not affect their amino acid accepting activity. Four elements in the acceptor stems of tRNAs are essential for substrate recognition by this enzyme: the target site C72, the 3'-CCA terminus, U73 or G73, and the second base pair C2:G71.</text>
</comment>
<comment type="catalytic activity">
    <reaction evidence="4">
        <text>cytidine(72) in tRNA + S-adenosyl-L-methionine = 5-methylcytidine(72) in tRNA + S-adenosyl-L-homocysteine + H(+)</text>
        <dbReference type="Rhea" id="RHEA:61988"/>
        <dbReference type="Rhea" id="RHEA-COMP:15996"/>
        <dbReference type="Rhea" id="RHEA-COMP:15997"/>
        <dbReference type="ChEBI" id="CHEBI:15378"/>
        <dbReference type="ChEBI" id="CHEBI:57856"/>
        <dbReference type="ChEBI" id="CHEBI:59789"/>
        <dbReference type="ChEBI" id="CHEBI:74483"/>
        <dbReference type="ChEBI" id="CHEBI:82748"/>
    </reaction>
    <physiologicalReaction direction="left-to-right" evidence="6">
        <dbReference type="Rhea" id="RHEA:61989"/>
    </physiologicalReaction>
</comment>
<comment type="catalytic activity">
    <reaction evidence="4">
        <text>cytidine(72) in tRNA(Thr) + S-adenosyl-L-methionine = 5-methylcytidine(72) in tRNA(Thr) + S-adenosyl-L-homocysteine + H(+)</text>
        <dbReference type="Rhea" id="RHEA:21124"/>
        <dbReference type="Rhea" id="RHEA-COMP:15877"/>
        <dbReference type="Rhea" id="RHEA-COMP:15878"/>
        <dbReference type="ChEBI" id="CHEBI:15378"/>
        <dbReference type="ChEBI" id="CHEBI:57856"/>
        <dbReference type="ChEBI" id="CHEBI:59789"/>
        <dbReference type="ChEBI" id="CHEBI:74483"/>
        <dbReference type="ChEBI" id="CHEBI:82748"/>
    </reaction>
    <physiologicalReaction direction="left-to-right" evidence="6">
        <dbReference type="Rhea" id="RHEA:21125"/>
    </physiologicalReaction>
</comment>
<comment type="catalytic activity">
    <reaction evidence="4">
        <text>cytidine(72) in tRNA(Cys) + S-adenosyl-L-methionine = 5-methylcytidine(72) in tRNA(Cys) + S-adenosyl-L-homocysteine + H(+)</text>
        <dbReference type="Rhea" id="RHEA:61584"/>
        <dbReference type="Rhea" id="RHEA-COMP:15875"/>
        <dbReference type="Rhea" id="RHEA-COMP:15876"/>
        <dbReference type="ChEBI" id="CHEBI:15378"/>
        <dbReference type="ChEBI" id="CHEBI:57856"/>
        <dbReference type="ChEBI" id="CHEBI:59789"/>
        <dbReference type="ChEBI" id="CHEBI:74483"/>
        <dbReference type="ChEBI" id="CHEBI:82748"/>
    </reaction>
    <physiologicalReaction direction="left-to-right" evidence="6">
        <dbReference type="Rhea" id="RHEA:61585"/>
    </physiologicalReaction>
</comment>
<comment type="biophysicochemical properties">
    <kinetics>
        <KM evidence="4">0.38 uM for tRNA(Cys)(GCA)</KM>
        <KM evidence="4">0.43 uM for tRNA(Thr)(CGU)</KM>
        <KM evidence="4">0.63 uM for tRNA(Thr)(GGU)</KM>
        <KM evidence="4">0.59 uM for tRNA(Thr)(GGU)</KM>
        <KM evidence="4">0.83 uM for tRNA(Ser)(UGA)</KM>
        <KM evidence="4">0.76 uM for tRNA(Ser)(CGA)</KM>
        <KM evidence="4">0.64 uM for tRNA(Ser)(GGA)</KM>
        <KM evidence="4">0.56 uM for tRNA(Ser)(GCU)</KM>
        <KM evidence="4">0.7 uM for tRNA(Asn)(GUU)</KM>
        <KM evidence="4">0.3 uM for tRNA(Asp)(GUC)</KM>
        <KM evidence="4">0.52 uM for tRNA(Arg)(GCG)</KM>
        <text evidence="4">kcat is 3.04 min(-1) with tRNA(Cys)(GCA) as substrate. kcat is 4.30 min(-1) with tRNA(Thr)(CGU) as substrate. kcat is 4.34 min(-1) with tRNA(Thr)(GGU) as substrate. kcat is 4.43 min(-1) with tRNA(Thr)(GGU) as substrate. kcat is 2.23 min(-1) with tRNA(Ser)(UGA) as substrate. kcat is 1.50 min(-1) with tRNA(Ser)(CGA) as substrate. kcat is 1.19 min(-1) with tRNA(Ser)(GGA) as substrate. kcat is 0.37 min(-1) with tRNA(Ser)(GCU) as substrate. kcat is 1.76 min(-1) with tRNA(Asn)(GUU) as substrate. kcat is 3.71 min(-1) with tRNA(Asp)(GUC) as substrate. kcat is 0.67 min(-1) with tRNA(Arg)(GCG) as substrate.</text>
    </kinetics>
    <temperatureDependence>
        <text evidence="4">Methyltransferase activity is much more higher at 65 degrees Celsius than at 55 and 37 degrees Celsius.</text>
    </temperatureDependence>
</comment>
<comment type="similarity">
    <text evidence="1">Belongs to the class I-like SAM-binding methyltransferase superfamily. RsmB/NOP family.</text>
</comment>
<organism>
    <name type="scientific">Pyrococcus horikoshii (strain ATCC 700860 / DSM 12428 / JCM 9974 / NBRC 100139 / OT-3)</name>
    <dbReference type="NCBI Taxonomy" id="70601"/>
    <lineage>
        <taxon>Archaea</taxon>
        <taxon>Methanobacteriati</taxon>
        <taxon>Methanobacteriota</taxon>
        <taxon>Thermococci</taxon>
        <taxon>Thermococcales</taxon>
        <taxon>Thermococcaceae</taxon>
        <taxon>Pyrococcus</taxon>
    </lineage>
</organism>
<accession>O57712</accession>
<reference key="1">
    <citation type="journal article" date="1998" name="DNA Res.">
        <title>Complete sequence and gene organization of the genome of a hyper-thermophilic archaebacterium, Pyrococcus horikoshii OT3.</title>
        <authorList>
            <person name="Kawarabayasi Y."/>
            <person name="Sawada M."/>
            <person name="Horikawa H."/>
            <person name="Haikawa Y."/>
            <person name="Hino Y."/>
            <person name="Yamamoto S."/>
            <person name="Sekine M."/>
            <person name="Baba S."/>
            <person name="Kosugi H."/>
            <person name="Hosoyama A."/>
            <person name="Nagai Y."/>
            <person name="Sakai M."/>
            <person name="Ogura K."/>
            <person name="Otsuka R."/>
            <person name="Nakazawa H."/>
            <person name="Takamiya M."/>
            <person name="Ohfuku Y."/>
            <person name="Funahashi T."/>
            <person name="Tanaka T."/>
            <person name="Kudoh Y."/>
            <person name="Yamazaki J."/>
            <person name="Kushida N."/>
            <person name="Oguchi A."/>
            <person name="Aoki K."/>
            <person name="Yoshizawa T."/>
            <person name="Nakamura Y."/>
            <person name="Robb F.T."/>
            <person name="Horikoshi K."/>
            <person name="Masuchi Y."/>
            <person name="Shizuya H."/>
            <person name="Kikuchi H."/>
        </authorList>
    </citation>
    <scope>NUCLEOTIDE SEQUENCE [LARGE SCALE GENOMIC DNA]</scope>
    <source>
        <strain>ATCC 700860 / DSM 12428 / JCM 9974 / NBRC 100139 / OT-3</strain>
    </source>
</reference>
<reference evidence="8 9 10" key="2">
    <citation type="journal article" date="2019" name="Nucleic Acids Res.">
        <title>Archaeal NSUN6 catalyzes m5C72 modification on a wide-range of specific tRNAs.</title>
        <authorList>
            <person name="Li J."/>
            <person name="Li H."/>
            <person name="Long T."/>
            <person name="Dong H."/>
            <person name="Wang E.D."/>
            <person name="Liu R.J."/>
        </authorList>
    </citation>
    <scope>X-RAY CRYSTALLOGRAPHY (2.18 ANGSTROMS) OF 5-388 OF APOENZYME AND IN COMPLEXES WITH S-ADENOSYLMETHIONINE; S-ADENOSYL-L-HOMOCYSTEINE AND SAM ANALOG</scope>
    <scope>FUNCTION</scope>
    <scope>CATALYTIC ACTIVITY</scope>
    <scope>SUBSTRATE SPECIFICITY</scope>
    <scope>BIOPHYSICOCHEMICAL PROPERTIES</scope>
    <source>
        <strain>ATCC 700860 / DSM 12428 / JCM 9974 / NBRC 100139 / OT-3</strain>
    </source>
</reference>
<keyword id="KW-0002">3D-structure</keyword>
<keyword id="KW-0489">Methyltransferase</keyword>
<keyword id="KW-0694">RNA-binding</keyword>
<keyword id="KW-0949">S-adenosyl-L-methionine</keyword>
<keyword id="KW-0808">Transferase</keyword>
<feature type="chain" id="PRO_0000448570" description="tRNA (cytosine(72)-C(5))-methyltransferase">
    <location>
        <begin position="1"/>
        <end position="389"/>
    </location>
</feature>
<feature type="domain" description="PUA" evidence="2">
    <location>
        <begin position="92"/>
        <end position="167"/>
    </location>
</feature>
<feature type="active site" description="Nucleophile" evidence="3">
    <location>
        <position position="327"/>
    </location>
</feature>
<feature type="binding site" evidence="3 4">
    <location>
        <begin position="209"/>
        <end position="215"/>
    </location>
    <ligand>
        <name>S-adenosyl-L-methionine</name>
        <dbReference type="ChEBI" id="CHEBI:59789"/>
    </ligand>
</feature>
<feature type="binding site" evidence="3 4">
    <location>
        <position position="233"/>
    </location>
    <ligand>
        <name>S-adenosyl-L-methionine</name>
        <dbReference type="ChEBI" id="CHEBI:59789"/>
    </ligand>
</feature>
<feature type="binding site" evidence="4">
    <location>
        <position position="238"/>
    </location>
    <ligand>
        <name>S-adenosyl-L-methionine</name>
        <dbReference type="ChEBI" id="CHEBI:59789"/>
    </ligand>
</feature>
<feature type="binding site" evidence="3 4">
    <location>
        <position position="260"/>
    </location>
    <ligand>
        <name>S-adenosyl-L-methionine</name>
        <dbReference type="ChEBI" id="CHEBI:59789"/>
    </ligand>
</feature>
<feature type="binding site" evidence="3 4">
    <location>
        <position position="277"/>
    </location>
    <ligand>
        <name>S-adenosyl-L-methionine</name>
        <dbReference type="ChEBI" id="CHEBI:59789"/>
    </ligand>
</feature>
<feature type="binding site" evidence="4">
    <location>
        <position position="304"/>
    </location>
    <ligand>
        <name>S-adenosyl-L-methionine</name>
        <dbReference type="ChEBI" id="CHEBI:59789"/>
    </ligand>
</feature>
<feature type="helix" evidence="11">
    <location>
        <begin position="6"/>
        <end position="8"/>
    </location>
</feature>
<feature type="helix" evidence="11">
    <location>
        <begin position="11"/>
        <end position="21"/>
    </location>
</feature>
<feature type="helix" evidence="11">
    <location>
        <begin position="23"/>
        <end position="33"/>
    </location>
</feature>
<feature type="strand" evidence="11">
    <location>
        <begin position="38"/>
        <end position="44"/>
    </location>
</feature>
<feature type="turn" evidence="11">
    <location>
        <begin position="46"/>
        <end position="48"/>
    </location>
</feature>
<feature type="helix" evidence="11">
    <location>
        <begin position="51"/>
        <end position="60"/>
    </location>
</feature>
<feature type="strand" evidence="11">
    <location>
        <begin position="74"/>
        <end position="78"/>
    </location>
</feature>
<feature type="strand" evidence="11">
    <location>
        <begin position="94"/>
        <end position="97"/>
    </location>
</feature>
<feature type="helix" evidence="11">
    <location>
        <begin position="99"/>
        <end position="105"/>
    </location>
</feature>
<feature type="turn" evidence="11">
    <location>
        <begin position="106"/>
        <end position="108"/>
    </location>
</feature>
<feature type="helix" evidence="11">
    <location>
        <begin position="113"/>
        <end position="115"/>
    </location>
</feature>
<feature type="strand" evidence="11">
    <location>
        <begin position="116"/>
        <end position="119"/>
    </location>
</feature>
<feature type="strand" evidence="11">
    <location>
        <begin position="128"/>
        <end position="132"/>
    </location>
</feature>
<feature type="strand" evidence="11">
    <location>
        <begin position="138"/>
        <end position="146"/>
    </location>
</feature>
<feature type="helix" evidence="11">
    <location>
        <begin position="148"/>
        <end position="151"/>
    </location>
</feature>
<feature type="strand" evidence="11">
    <location>
        <begin position="155"/>
        <end position="168"/>
    </location>
</feature>
<feature type="helix" evidence="11">
    <location>
        <begin position="176"/>
        <end position="179"/>
    </location>
</feature>
<feature type="strand" evidence="11">
    <location>
        <begin position="183"/>
        <end position="185"/>
    </location>
</feature>
<feature type="helix" evidence="11">
    <location>
        <begin position="188"/>
        <end position="197"/>
    </location>
</feature>
<feature type="strand" evidence="11">
    <location>
        <begin position="205"/>
        <end position="209"/>
    </location>
</feature>
<feature type="helix" evidence="11">
    <location>
        <begin position="214"/>
        <end position="222"/>
    </location>
</feature>
<feature type="turn" evidence="11">
    <location>
        <begin position="223"/>
        <end position="225"/>
    </location>
</feature>
<feature type="strand" evidence="11">
    <location>
        <begin position="229"/>
        <end position="234"/>
    </location>
</feature>
<feature type="helix" evidence="11">
    <location>
        <begin position="236"/>
        <end position="249"/>
    </location>
</feature>
<feature type="strand" evidence="11">
    <location>
        <begin position="253"/>
        <end position="259"/>
    </location>
</feature>
<feature type="helix" evidence="11">
    <location>
        <begin position="261"/>
        <end position="266"/>
    </location>
</feature>
<feature type="strand" evidence="11">
    <location>
        <begin position="271"/>
        <end position="277"/>
    </location>
</feature>
<feature type="helix" evidence="11">
    <location>
        <begin position="295"/>
        <end position="314"/>
    </location>
</feature>
<feature type="strand" evidence="11">
    <location>
        <begin position="316"/>
        <end position="327"/>
    </location>
</feature>
<feature type="turn" evidence="11">
    <location>
        <begin position="332"/>
        <end position="334"/>
    </location>
</feature>
<feature type="helix" evidence="11">
    <location>
        <begin position="335"/>
        <end position="343"/>
    </location>
</feature>
<feature type="strand" evidence="11">
    <location>
        <begin position="346"/>
        <end position="348"/>
    </location>
</feature>
<feature type="strand" evidence="11">
    <location>
        <begin position="356"/>
        <end position="359"/>
    </location>
</feature>
<feature type="strand" evidence="11">
    <location>
        <begin position="362"/>
        <end position="368"/>
    </location>
</feature>
<feature type="helix" evidence="11">
    <location>
        <begin position="370"/>
        <end position="373"/>
    </location>
</feature>
<feature type="strand" evidence="11">
    <location>
        <begin position="378"/>
        <end position="385"/>
    </location>
</feature>
<evidence type="ECO:0000255" key="1">
    <source>
        <dbReference type="HAMAP-Rule" id="MF_02237"/>
    </source>
</evidence>
<evidence type="ECO:0000255" key="2">
    <source>
        <dbReference type="PROSITE-ProRule" id="PRU00161"/>
    </source>
</evidence>
<evidence type="ECO:0000255" key="3">
    <source>
        <dbReference type="PROSITE-ProRule" id="PRU01023"/>
    </source>
</evidence>
<evidence type="ECO:0000269" key="4">
    <source>
    </source>
</evidence>
<evidence type="ECO:0000303" key="5">
    <source>
    </source>
</evidence>
<evidence type="ECO:0000305" key="6">
    <source>
    </source>
</evidence>
<evidence type="ECO:0000312" key="7">
    <source>
        <dbReference type="EMBL" id="BAA31118.1"/>
    </source>
</evidence>
<evidence type="ECO:0007744" key="8">
    <source>
        <dbReference type="PDB" id="5ZVD"/>
    </source>
</evidence>
<evidence type="ECO:0007744" key="9">
    <source>
        <dbReference type="PDB" id="5ZVE"/>
    </source>
</evidence>
<evidence type="ECO:0007744" key="10">
    <source>
        <dbReference type="PDB" id="5ZVG"/>
    </source>
</evidence>
<evidence type="ECO:0007829" key="11">
    <source>
        <dbReference type="PDB" id="5ZVE"/>
    </source>
</evidence>
<dbReference type="EC" id="2.1.1.-" evidence="4"/>
<dbReference type="EMBL" id="BA000001">
    <property type="protein sequence ID" value="BAA31118.1"/>
    <property type="molecule type" value="Genomic_DNA"/>
</dbReference>
<dbReference type="PIR" id="G71215">
    <property type="entry name" value="G71215"/>
</dbReference>
<dbReference type="PDB" id="5ZVD">
    <property type="method" value="X-ray"/>
    <property type="resolution" value="2.59 A"/>
    <property type="chains" value="A/B=5-388"/>
</dbReference>
<dbReference type="PDB" id="5ZVE">
    <property type="method" value="X-ray"/>
    <property type="resolution" value="2.18 A"/>
    <property type="chains" value="A/B=5-388"/>
</dbReference>
<dbReference type="PDB" id="5ZVG">
    <property type="method" value="X-ray"/>
    <property type="resolution" value="2.50 A"/>
    <property type="chains" value="A/B=5-388"/>
</dbReference>
<dbReference type="PDB" id="5ZVH">
    <property type="method" value="X-ray"/>
    <property type="resolution" value="2.50 A"/>
    <property type="chains" value="A/B=5-388"/>
</dbReference>
<dbReference type="PDBsum" id="5ZVD"/>
<dbReference type="PDBsum" id="5ZVE"/>
<dbReference type="PDBsum" id="5ZVG"/>
<dbReference type="PDBsum" id="5ZVH"/>
<dbReference type="SMR" id="O57712"/>
<dbReference type="STRING" id="70601.gene:9379004"/>
<dbReference type="EnsemblBacteria" id="BAA31118">
    <property type="protein sequence ID" value="BAA31118"/>
    <property type="gene ID" value="BAA31118"/>
</dbReference>
<dbReference type="KEGG" id="pho:PH1991"/>
<dbReference type="eggNOG" id="arCOG00973">
    <property type="taxonomic scope" value="Archaea"/>
</dbReference>
<dbReference type="eggNOG" id="arCOG00986">
    <property type="taxonomic scope" value="Archaea"/>
</dbReference>
<dbReference type="BRENDA" id="2.1.1.202">
    <property type="organism ID" value="5244"/>
</dbReference>
<dbReference type="SABIO-RK" id="O57712"/>
<dbReference type="Proteomes" id="UP000000752">
    <property type="component" value="Chromosome"/>
</dbReference>
<dbReference type="GO" id="GO:0016428">
    <property type="term" value="F:tRNA (cytidine-5-)-methyltransferase activity"/>
    <property type="evidence" value="ECO:0000314"/>
    <property type="project" value="UniProtKB"/>
</dbReference>
<dbReference type="GO" id="GO:0000049">
    <property type="term" value="F:tRNA binding"/>
    <property type="evidence" value="ECO:0000314"/>
    <property type="project" value="UniProtKB"/>
</dbReference>
<dbReference type="GO" id="GO:0001510">
    <property type="term" value="P:RNA methylation"/>
    <property type="evidence" value="ECO:0007669"/>
    <property type="project" value="InterPro"/>
</dbReference>
<dbReference type="GO" id="GO:0006400">
    <property type="term" value="P:tRNA modification"/>
    <property type="evidence" value="ECO:0000314"/>
    <property type="project" value="UniProtKB"/>
</dbReference>
<dbReference type="CDD" id="cd02440">
    <property type="entry name" value="AdoMet_MTases"/>
    <property type="match status" value="1"/>
</dbReference>
<dbReference type="CDD" id="cd07953">
    <property type="entry name" value="PUA"/>
    <property type="match status" value="1"/>
</dbReference>
<dbReference type="Gene3D" id="2.30.130.10">
    <property type="entry name" value="PUA domain"/>
    <property type="match status" value="1"/>
</dbReference>
<dbReference type="Gene3D" id="3.30.70.1170">
    <property type="entry name" value="Sun protein, domain 3"/>
    <property type="match status" value="1"/>
</dbReference>
<dbReference type="Gene3D" id="3.40.50.150">
    <property type="entry name" value="Vaccinia Virus protein VP39"/>
    <property type="match status" value="1"/>
</dbReference>
<dbReference type="HAMAP" id="MF_02237">
    <property type="entry name" value="NSUN6"/>
    <property type="match status" value="1"/>
</dbReference>
<dbReference type="InterPro" id="IPR049560">
    <property type="entry name" value="MeTrfase_RsmB-F_NOP2_cat"/>
</dbReference>
<dbReference type="InterPro" id="IPR001678">
    <property type="entry name" value="MeTrfase_RsmB-F_NOP2_dom"/>
</dbReference>
<dbReference type="InterPro" id="IPR011023">
    <property type="entry name" value="Nop2p"/>
</dbReference>
<dbReference type="InterPro" id="IPR043699">
    <property type="entry name" value="NSUN6"/>
</dbReference>
<dbReference type="InterPro" id="IPR002478">
    <property type="entry name" value="PUA"/>
</dbReference>
<dbReference type="InterPro" id="IPR015947">
    <property type="entry name" value="PUA-like_sf"/>
</dbReference>
<dbReference type="InterPro" id="IPR036974">
    <property type="entry name" value="PUA_sf"/>
</dbReference>
<dbReference type="InterPro" id="IPR023267">
    <property type="entry name" value="RCMT"/>
</dbReference>
<dbReference type="InterPro" id="IPR054728">
    <property type="entry name" value="RsmB-like_ferredoxin"/>
</dbReference>
<dbReference type="InterPro" id="IPR029063">
    <property type="entry name" value="SAM-dependent_MTases_sf"/>
</dbReference>
<dbReference type="InterPro" id="IPR004521">
    <property type="entry name" value="Uncharacterised_CHP00451"/>
</dbReference>
<dbReference type="NCBIfam" id="TIGR00446">
    <property type="entry name" value="nop2p"/>
    <property type="match status" value="1"/>
</dbReference>
<dbReference type="NCBIfam" id="TIGR00451">
    <property type="entry name" value="unchar_dom_2"/>
    <property type="match status" value="1"/>
</dbReference>
<dbReference type="PANTHER" id="PTHR22807">
    <property type="entry name" value="NOP2 YEAST -RELATED NOL1/NOP2/FMU SUN DOMAIN-CONTAINING"/>
    <property type="match status" value="1"/>
</dbReference>
<dbReference type="PANTHER" id="PTHR22807:SF34">
    <property type="entry name" value="TRNA (CYTOSINE(72)-C(5))-METHYLTRANSFERASE NSUN6"/>
    <property type="match status" value="1"/>
</dbReference>
<dbReference type="Pfam" id="PF01189">
    <property type="entry name" value="Methyltr_RsmB-F"/>
    <property type="match status" value="1"/>
</dbReference>
<dbReference type="Pfam" id="PF01472">
    <property type="entry name" value="PUA"/>
    <property type="match status" value="1"/>
</dbReference>
<dbReference type="Pfam" id="PF22458">
    <property type="entry name" value="RsmF-B_ferredox"/>
    <property type="match status" value="1"/>
</dbReference>
<dbReference type="PRINTS" id="PR02008">
    <property type="entry name" value="RCMTFAMILY"/>
</dbReference>
<dbReference type="SMART" id="SM00359">
    <property type="entry name" value="PUA"/>
    <property type="match status" value="1"/>
</dbReference>
<dbReference type="SUPFAM" id="SSF88697">
    <property type="entry name" value="PUA domain-like"/>
    <property type="match status" value="1"/>
</dbReference>
<dbReference type="SUPFAM" id="SSF53335">
    <property type="entry name" value="S-adenosyl-L-methionine-dependent methyltransferases"/>
    <property type="match status" value="1"/>
</dbReference>
<dbReference type="PROSITE" id="PS50890">
    <property type="entry name" value="PUA"/>
    <property type="match status" value="1"/>
</dbReference>
<dbReference type="PROSITE" id="PS51686">
    <property type="entry name" value="SAM_MT_RSMB_NOP"/>
    <property type="match status" value="1"/>
</dbReference>
<sequence>MAMNYLEAFPKELREYYKNLFGKEEANKIMKKLREPVEHYYIRVNTLKISREKLIGELKKEGLKPLRSPYLPEGLYFVREGPNFSDDFEPKLPVVVANKYAAESVYQGAMLYAPGVLKADKNIKEGDEVQIRDPKGLLVGIGIARMDYKEMTEATRGLAVEVTLPKFKLPSLSELKAFEKGYFYPQGLPSMVTARVLEPKEDDVIIDMAAAPGGKTTHIAQLLENKGEIIAIDKSKNRLRKMEENIKRLGVKNVKLVQMDARKLPDLGIKADKILLDAPCTALGVRPKLWEERTLKHIEATARYQRAFIWAAIKSLRRGGVLVYSTCTLSYEENEGNVKFMIRKGMKLEEQSIFIGSPGIGMNKVQRFYPHKHLTQGFFIAKLRKVKDI</sequence>
<name>NSUN6_PYRHO</name>
<gene>
    <name evidence="7" type="ordered locus">PH1991</name>
</gene>